<gene>
    <name evidence="1" type="primary">rhaT</name>
    <name type="ordered locus">SF3984</name>
    <name type="ordered locus">S3764</name>
</gene>
<reference key="1">
    <citation type="journal article" date="2002" name="Nucleic Acids Res.">
        <title>Genome sequence of Shigella flexneri 2a: insights into pathogenicity through comparison with genomes of Escherichia coli K12 and O157.</title>
        <authorList>
            <person name="Jin Q."/>
            <person name="Yuan Z."/>
            <person name="Xu J."/>
            <person name="Wang Y."/>
            <person name="Shen Y."/>
            <person name="Lu W."/>
            <person name="Wang J."/>
            <person name="Liu H."/>
            <person name="Yang J."/>
            <person name="Yang F."/>
            <person name="Zhang X."/>
            <person name="Zhang J."/>
            <person name="Yang G."/>
            <person name="Wu H."/>
            <person name="Qu D."/>
            <person name="Dong J."/>
            <person name="Sun L."/>
            <person name="Xue Y."/>
            <person name="Zhao A."/>
            <person name="Gao Y."/>
            <person name="Zhu J."/>
            <person name="Kan B."/>
            <person name="Ding K."/>
            <person name="Chen S."/>
            <person name="Cheng H."/>
            <person name="Yao Z."/>
            <person name="He B."/>
            <person name="Chen R."/>
            <person name="Ma D."/>
            <person name="Qiang B."/>
            <person name="Wen Y."/>
            <person name="Hou Y."/>
            <person name="Yu J."/>
        </authorList>
    </citation>
    <scope>NUCLEOTIDE SEQUENCE [LARGE SCALE GENOMIC DNA]</scope>
    <source>
        <strain>301 / Serotype 2a</strain>
    </source>
</reference>
<reference key="2">
    <citation type="journal article" date="2003" name="Infect. Immun.">
        <title>Complete genome sequence and comparative genomics of Shigella flexneri serotype 2a strain 2457T.</title>
        <authorList>
            <person name="Wei J."/>
            <person name="Goldberg M.B."/>
            <person name="Burland V."/>
            <person name="Venkatesan M.M."/>
            <person name="Deng W."/>
            <person name="Fournier G."/>
            <person name="Mayhew G.F."/>
            <person name="Plunkett G. III"/>
            <person name="Rose D.J."/>
            <person name="Darling A."/>
            <person name="Mau B."/>
            <person name="Perna N.T."/>
            <person name="Payne S.M."/>
            <person name="Runyen-Janecky L.J."/>
            <person name="Zhou S."/>
            <person name="Schwartz D.C."/>
            <person name="Blattner F.R."/>
        </authorList>
    </citation>
    <scope>NUCLEOTIDE SEQUENCE [LARGE SCALE GENOMIC DNA]</scope>
    <source>
        <strain>ATCC 700930 / 2457T / Serotype 2a</strain>
    </source>
</reference>
<comment type="function">
    <text evidence="1">Uptake of L-rhamnose across the cytoplasmic membrane with the concomitant transport of protons into the cell (symport system).</text>
</comment>
<comment type="catalytic activity">
    <reaction evidence="1">
        <text>L-rhamnopyranose(in) + H(+)(in) = L-rhamnopyranose(out) + H(+)(out)</text>
        <dbReference type="Rhea" id="RHEA:29947"/>
        <dbReference type="ChEBI" id="CHEBI:15378"/>
        <dbReference type="ChEBI" id="CHEBI:62346"/>
    </reaction>
    <physiologicalReaction direction="right-to-left" evidence="1">
        <dbReference type="Rhea" id="RHEA:29949"/>
    </physiologicalReaction>
</comment>
<comment type="subcellular location">
    <subcellularLocation>
        <location evidence="1">Cell inner membrane</location>
        <topology evidence="1">Multi-pass membrane protein</topology>
    </subcellularLocation>
</comment>
<comment type="similarity">
    <text evidence="1">Belongs to the L-rhamnose transporter (TC 2.A.7.6) family.</text>
</comment>
<comment type="sequence caution" evidence="2">
    <conflict type="erroneous termination">
        <sequence resource="EMBL-CDS" id="AAN45418"/>
    </conflict>
    <text>Truncated C-terminus.</text>
</comment>
<comment type="sequence caution" evidence="2">
    <conflict type="erroneous termination">
        <sequence resource="EMBL" id="AE014073"/>
    </conflict>
    <text>Truncated C-terminus.</text>
</comment>
<organism>
    <name type="scientific">Shigella flexneri</name>
    <dbReference type="NCBI Taxonomy" id="623"/>
    <lineage>
        <taxon>Bacteria</taxon>
        <taxon>Pseudomonadati</taxon>
        <taxon>Pseudomonadota</taxon>
        <taxon>Gammaproteobacteria</taxon>
        <taxon>Enterobacterales</taxon>
        <taxon>Enterobacteriaceae</taxon>
        <taxon>Shigella</taxon>
    </lineage>
</organism>
<keyword id="KW-0997">Cell inner membrane</keyword>
<keyword id="KW-1003">Cell membrane</keyword>
<keyword id="KW-0472">Membrane</keyword>
<keyword id="KW-1185">Reference proteome</keyword>
<keyword id="KW-0762">Sugar transport</keyword>
<keyword id="KW-0769">Symport</keyword>
<keyword id="KW-0812">Transmembrane</keyword>
<keyword id="KW-1133">Transmembrane helix</keyword>
<keyword id="KW-0813">Transport</keyword>
<dbReference type="EMBL" id="AE005674">
    <property type="protein sequence ID" value="AAN45418.1"/>
    <property type="status" value="ALT_SEQ"/>
    <property type="molecule type" value="Genomic_DNA"/>
</dbReference>
<dbReference type="EMBL" id="AE014073">
    <property type="status" value="NOT_ANNOTATED_CDS"/>
    <property type="molecule type" value="Genomic_DNA"/>
</dbReference>
<dbReference type="STRING" id="198214.SF3984"/>
<dbReference type="PaxDb" id="198214-SF3984"/>
<dbReference type="HOGENOM" id="CLU_066437_0_0_6"/>
<dbReference type="Proteomes" id="UP000001006">
    <property type="component" value="Chromosome"/>
</dbReference>
<dbReference type="Proteomes" id="UP000002673">
    <property type="component" value="Chromosome"/>
</dbReference>
<dbReference type="GO" id="GO:0005886">
    <property type="term" value="C:plasma membrane"/>
    <property type="evidence" value="ECO:0007669"/>
    <property type="project" value="UniProtKB-SubCell"/>
</dbReference>
<dbReference type="GO" id="GO:0015153">
    <property type="term" value="F:rhamnose transmembrane transporter activity"/>
    <property type="evidence" value="ECO:0007669"/>
    <property type="project" value="UniProtKB-UniRule"/>
</dbReference>
<dbReference type="GO" id="GO:0015293">
    <property type="term" value="F:symporter activity"/>
    <property type="evidence" value="ECO:0007669"/>
    <property type="project" value="UniProtKB-KW"/>
</dbReference>
<dbReference type="HAMAP" id="MF_01532">
    <property type="entry name" value="RhaT"/>
    <property type="match status" value="1"/>
</dbReference>
<dbReference type="InterPro" id="IPR004673">
    <property type="entry name" value="L-rhamnose-proton_sym_RhaT"/>
</dbReference>
<dbReference type="NCBIfam" id="NF010021">
    <property type="entry name" value="PRK13499.1-1"/>
    <property type="match status" value="1"/>
</dbReference>
<dbReference type="NCBIfam" id="NF010023">
    <property type="entry name" value="PRK13499.1-3"/>
    <property type="match status" value="1"/>
</dbReference>
<dbReference type="NCBIfam" id="TIGR00776">
    <property type="entry name" value="RhaT"/>
    <property type="match status" value="1"/>
</dbReference>
<dbReference type="Pfam" id="PF06379">
    <property type="entry name" value="RhaT"/>
    <property type="match status" value="1"/>
</dbReference>
<name>RHAT_SHIFL</name>
<proteinExistence type="inferred from homology"/>
<protein>
    <recommendedName>
        <fullName evidence="1">L-rhamnose-proton symporter</fullName>
    </recommendedName>
    <alternativeName>
        <fullName evidence="1">L-rhamnose-H(+) transport protein</fullName>
    </alternativeName>
</protein>
<feature type="chain" id="PRO_0000208281" description="L-rhamnose-proton symporter">
    <location>
        <begin position="1"/>
        <end position="344"/>
    </location>
</feature>
<feature type="transmembrane region" description="Helical" evidence="1">
    <location>
        <begin position="4"/>
        <end position="24"/>
    </location>
</feature>
<feature type="transmembrane region" description="Helical" evidence="1">
    <location>
        <begin position="38"/>
        <end position="58"/>
    </location>
</feature>
<feature type="transmembrane region" description="Helical" evidence="1">
    <location>
        <begin position="68"/>
        <end position="88"/>
    </location>
</feature>
<feature type="transmembrane region" description="Helical" evidence="1">
    <location>
        <begin position="101"/>
        <end position="121"/>
    </location>
</feature>
<feature type="transmembrane region" description="Helical" evidence="1">
    <location>
        <begin position="137"/>
        <end position="157"/>
    </location>
</feature>
<feature type="transmembrane region" description="Helical" evidence="1">
    <location>
        <begin position="175"/>
        <end position="195"/>
    </location>
</feature>
<feature type="transmembrane region" description="Helical" evidence="1">
    <location>
        <begin position="214"/>
        <end position="234"/>
    </location>
</feature>
<feature type="transmembrane region" description="Helical" evidence="1">
    <location>
        <begin position="259"/>
        <end position="279"/>
    </location>
</feature>
<feature type="transmembrane region" description="Helical" evidence="1">
    <location>
        <begin position="290"/>
        <end position="310"/>
    </location>
</feature>
<feature type="transmembrane region" description="Helical" evidence="1">
    <location>
        <begin position="323"/>
        <end position="343"/>
    </location>
</feature>
<evidence type="ECO:0000255" key="1">
    <source>
        <dbReference type="HAMAP-Rule" id="MF_01532"/>
    </source>
</evidence>
<evidence type="ECO:0000305" key="2"/>
<sequence>MSNAITMGIFWHLIGAASAACFYAPFKKVKKWSWETMWSVGGIVSWIILPWAISALLLPDFWAYYSSFSLSTLLPVFLFGAMWGIGNINYGLTMRYLGMSMGIGIAIGITLIVGTLMTPIINGNFDVLINTEGGRMTLLGVLVALIGVGIVTRAGQLKERKMGIKAEEFNLKKGLVLAVMCGIFSAGMSFAMNAAKPMHEAAAALGVDPLYVALPSYVVIMGGGAIINLGFCFIRLAKVKDLSLKADFSLAKPLIIHNVLLSALGGLMWYLQFFFYAWGHARIPAQYDYISWMLHMSFYVLCGGIVGLVLKEWNNTGRRPVTVLSLGCVVIIVAANIVGIGMAN</sequence>
<accession>Q83PD8</accession>